<gene>
    <name type="ordered locus">At1g10810</name>
    <name type="ORF">T16B5.5</name>
</gene>
<keyword id="KW-0521">NADP</keyword>
<keyword id="KW-0560">Oxidoreductase</keyword>
<keyword id="KW-1185">Reference proteome</keyword>
<protein>
    <recommendedName>
        <fullName>Probable aldo-keto reductase 1</fullName>
        <ecNumber>1.1.1.-</ecNumber>
    </recommendedName>
</protein>
<dbReference type="EC" id="1.1.1.-"/>
<dbReference type="EMBL" id="AC007354">
    <property type="protein sequence ID" value="AAD31332.1"/>
    <property type="status" value="ALT_SEQ"/>
    <property type="molecule type" value="Genomic_DNA"/>
</dbReference>
<dbReference type="EMBL" id="CP002684">
    <property type="protein sequence ID" value="AEE28648.1"/>
    <property type="molecule type" value="Genomic_DNA"/>
</dbReference>
<dbReference type="EMBL" id="AF361098">
    <property type="protein sequence ID" value="AAK27238.1"/>
    <property type="molecule type" value="mRNA"/>
</dbReference>
<dbReference type="EMBL" id="AK176341">
    <property type="protein sequence ID" value="BAD44104.1"/>
    <property type="molecule type" value="mRNA"/>
</dbReference>
<dbReference type="EMBL" id="AK176414">
    <property type="protein sequence ID" value="BAD44177.1"/>
    <property type="molecule type" value="mRNA"/>
</dbReference>
<dbReference type="PIR" id="G86241">
    <property type="entry name" value="G86241"/>
</dbReference>
<dbReference type="RefSeq" id="NP_172551.1">
    <property type="nucleotide sequence ID" value="NM_100957.3"/>
</dbReference>
<dbReference type="SMR" id="Q9C5B9"/>
<dbReference type="FunCoup" id="Q9C5B9">
    <property type="interactions" value="25"/>
</dbReference>
<dbReference type="STRING" id="3702.Q9C5B9"/>
<dbReference type="PaxDb" id="3702-AT1G10810.1"/>
<dbReference type="ProteomicsDB" id="245017"/>
<dbReference type="EnsemblPlants" id="AT1G10810.1">
    <property type="protein sequence ID" value="AT1G10810.1"/>
    <property type="gene ID" value="AT1G10810"/>
</dbReference>
<dbReference type="GeneID" id="837624"/>
<dbReference type="Gramene" id="AT1G10810.1">
    <property type="protein sequence ID" value="AT1G10810.1"/>
    <property type="gene ID" value="AT1G10810"/>
</dbReference>
<dbReference type="KEGG" id="ath:AT1G10810"/>
<dbReference type="Araport" id="AT1G10810"/>
<dbReference type="TAIR" id="AT1G10810"/>
<dbReference type="eggNOG" id="KOG1575">
    <property type="taxonomic scope" value="Eukaryota"/>
</dbReference>
<dbReference type="HOGENOM" id="CLU_023205_2_1_1"/>
<dbReference type="InParanoid" id="Q9C5B9"/>
<dbReference type="OMA" id="TWKYCET"/>
<dbReference type="PhylomeDB" id="Q9C5B9"/>
<dbReference type="BioCyc" id="ARA:AT1G10810-MONOMER"/>
<dbReference type="PRO" id="PR:Q9C5B9"/>
<dbReference type="Proteomes" id="UP000006548">
    <property type="component" value="Chromosome 1"/>
</dbReference>
<dbReference type="ExpressionAtlas" id="Q9C5B9">
    <property type="expression patterns" value="baseline and differential"/>
</dbReference>
<dbReference type="GO" id="GO:0016491">
    <property type="term" value="F:oxidoreductase activity"/>
    <property type="evidence" value="ECO:0007669"/>
    <property type="project" value="UniProtKB-KW"/>
</dbReference>
<dbReference type="CDD" id="cd19145">
    <property type="entry name" value="AKR_AKR13D1"/>
    <property type="match status" value="1"/>
</dbReference>
<dbReference type="FunFam" id="3.20.20.100:FF:000048">
    <property type="entry name" value="Probable aldo-keto reductase 4"/>
    <property type="match status" value="1"/>
</dbReference>
<dbReference type="Gene3D" id="3.20.20.100">
    <property type="entry name" value="NADP-dependent oxidoreductase domain"/>
    <property type="match status" value="1"/>
</dbReference>
<dbReference type="InterPro" id="IPR050791">
    <property type="entry name" value="Aldo-Keto_reductase"/>
</dbReference>
<dbReference type="InterPro" id="IPR023210">
    <property type="entry name" value="NADP_OxRdtase_dom"/>
</dbReference>
<dbReference type="InterPro" id="IPR036812">
    <property type="entry name" value="NADP_OxRdtase_dom_sf"/>
</dbReference>
<dbReference type="PANTHER" id="PTHR43625">
    <property type="entry name" value="AFLATOXIN B1 ALDEHYDE REDUCTASE"/>
    <property type="match status" value="1"/>
</dbReference>
<dbReference type="PANTHER" id="PTHR43625:SF44">
    <property type="entry name" value="ALDO-KETO REDUCTASE 1-RELATED"/>
    <property type="match status" value="1"/>
</dbReference>
<dbReference type="Pfam" id="PF00248">
    <property type="entry name" value="Aldo_ket_red"/>
    <property type="match status" value="1"/>
</dbReference>
<dbReference type="SUPFAM" id="SSF51430">
    <property type="entry name" value="NAD(P)-linked oxidoreductase"/>
    <property type="match status" value="1"/>
</dbReference>
<proteinExistence type="evidence at transcript level"/>
<sequence>MAAASGVRRIKLGSQGLEVSAQGLGCMGLSIFDGTTKVETDLIALIHHAINSGITLLDTSDIYGPETNELLLGQALKDGMREKVELATKFGLLLKDQKLGYRGDPAYVRAACEASLRRLGVSCIDLYYQHRIDTTVPIEVTIGELKKLVEEGKIKYIGLSEACASTIRRAHAVHPLTAVQLEWSLWSRDVEEDIIPTCRELGIGIVAYSPLGLGFFAAGPKFIESMDNGDYRKGLPRFQQENLDHNKILYEKVNAMAEKKSCTPAQLALAWVHHQGNDVCPIPGTSKIKNLNQNIGALSVKLSIEEMAELDAMGHPDSVKGERSATYIVTYKNSETPPLSSWTS</sequence>
<name>ALKR1_ARATH</name>
<evidence type="ECO:0000250" key="1"/>
<evidence type="ECO:0000305" key="2"/>
<organism>
    <name type="scientific">Arabidopsis thaliana</name>
    <name type="common">Mouse-ear cress</name>
    <dbReference type="NCBI Taxonomy" id="3702"/>
    <lineage>
        <taxon>Eukaryota</taxon>
        <taxon>Viridiplantae</taxon>
        <taxon>Streptophyta</taxon>
        <taxon>Embryophyta</taxon>
        <taxon>Tracheophyta</taxon>
        <taxon>Spermatophyta</taxon>
        <taxon>Magnoliopsida</taxon>
        <taxon>eudicotyledons</taxon>
        <taxon>Gunneridae</taxon>
        <taxon>Pentapetalae</taxon>
        <taxon>rosids</taxon>
        <taxon>malvids</taxon>
        <taxon>Brassicales</taxon>
        <taxon>Brassicaceae</taxon>
        <taxon>Camelineae</taxon>
        <taxon>Arabidopsis</taxon>
    </lineage>
</organism>
<comment type="similarity">
    <text evidence="2">Belongs to the aldo/keto reductase family.</text>
</comment>
<comment type="sequence caution" evidence="2">
    <conflict type="erroneous gene model prediction">
        <sequence resource="EMBL-CDS" id="AAD31332"/>
    </conflict>
</comment>
<feature type="chain" id="PRO_0000415740" description="Probable aldo-keto reductase 1">
    <location>
        <begin position="1"/>
        <end position="344"/>
    </location>
</feature>
<feature type="active site" description="Proton donor" evidence="1">
    <location>
        <position position="63"/>
    </location>
</feature>
<feature type="binding site" evidence="1">
    <location>
        <position position="130"/>
    </location>
    <ligand>
        <name>substrate</name>
    </ligand>
</feature>
<feature type="binding site" evidence="1">
    <location>
        <begin position="209"/>
        <end position="219"/>
    </location>
    <ligand>
        <name>NADP(+)</name>
        <dbReference type="ChEBI" id="CHEBI:58349"/>
    </ligand>
</feature>
<feature type="sequence conflict" description="In Ref. 4; BAD44104/BAD44177." evidence="2" ref="4">
    <original>V</original>
    <variation>A</variation>
    <location>
        <position position="108"/>
    </location>
</feature>
<accession>Q9C5B9</accession>
<accession>Q67YQ4</accession>
<accession>Q9SAC2</accession>
<reference key="1">
    <citation type="journal article" date="2000" name="Nature">
        <title>Sequence and analysis of chromosome 1 of the plant Arabidopsis thaliana.</title>
        <authorList>
            <person name="Theologis A."/>
            <person name="Ecker J.R."/>
            <person name="Palm C.J."/>
            <person name="Federspiel N.A."/>
            <person name="Kaul S."/>
            <person name="White O."/>
            <person name="Alonso J."/>
            <person name="Altafi H."/>
            <person name="Araujo R."/>
            <person name="Bowman C.L."/>
            <person name="Brooks S.Y."/>
            <person name="Buehler E."/>
            <person name="Chan A."/>
            <person name="Chao Q."/>
            <person name="Chen H."/>
            <person name="Cheuk R.F."/>
            <person name="Chin C.W."/>
            <person name="Chung M.K."/>
            <person name="Conn L."/>
            <person name="Conway A.B."/>
            <person name="Conway A.R."/>
            <person name="Creasy T.H."/>
            <person name="Dewar K."/>
            <person name="Dunn P."/>
            <person name="Etgu P."/>
            <person name="Feldblyum T.V."/>
            <person name="Feng J.-D."/>
            <person name="Fong B."/>
            <person name="Fujii C.Y."/>
            <person name="Gill J.E."/>
            <person name="Goldsmith A.D."/>
            <person name="Haas B."/>
            <person name="Hansen N.F."/>
            <person name="Hughes B."/>
            <person name="Huizar L."/>
            <person name="Hunter J.L."/>
            <person name="Jenkins J."/>
            <person name="Johnson-Hopson C."/>
            <person name="Khan S."/>
            <person name="Khaykin E."/>
            <person name="Kim C.J."/>
            <person name="Koo H.L."/>
            <person name="Kremenetskaia I."/>
            <person name="Kurtz D.B."/>
            <person name="Kwan A."/>
            <person name="Lam B."/>
            <person name="Langin-Hooper S."/>
            <person name="Lee A."/>
            <person name="Lee J.M."/>
            <person name="Lenz C.A."/>
            <person name="Li J.H."/>
            <person name="Li Y.-P."/>
            <person name="Lin X."/>
            <person name="Liu S.X."/>
            <person name="Liu Z.A."/>
            <person name="Luros J.S."/>
            <person name="Maiti R."/>
            <person name="Marziali A."/>
            <person name="Militscher J."/>
            <person name="Miranda M."/>
            <person name="Nguyen M."/>
            <person name="Nierman W.C."/>
            <person name="Osborne B.I."/>
            <person name="Pai G."/>
            <person name="Peterson J."/>
            <person name="Pham P.K."/>
            <person name="Rizzo M."/>
            <person name="Rooney T."/>
            <person name="Rowley D."/>
            <person name="Sakano H."/>
            <person name="Salzberg S.L."/>
            <person name="Schwartz J.R."/>
            <person name="Shinn P."/>
            <person name="Southwick A.M."/>
            <person name="Sun H."/>
            <person name="Tallon L.J."/>
            <person name="Tambunga G."/>
            <person name="Toriumi M.J."/>
            <person name="Town C.D."/>
            <person name="Utterback T."/>
            <person name="Van Aken S."/>
            <person name="Vaysberg M."/>
            <person name="Vysotskaia V.S."/>
            <person name="Walker M."/>
            <person name="Wu D."/>
            <person name="Yu G."/>
            <person name="Fraser C.M."/>
            <person name="Venter J.C."/>
            <person name="Davis R.W."/>
        </authorList>
    </citation>
    <scope>NUCLEOTIDE SEQUENCE [LARGE SCALE GENOMIC DNA]</scope>
    <source>
        <strain>cv. Columbia</strain>
    </source>
</reference>
<reference key="2">
    <citation type="journal article" date="2017" name="Plant J.">
        <title>Araport11: a complete reannotation of the Arabidopsis thaliana reference genome.</title>
        <authorList>
            <person name="Cheng C.Y."/>
            <person name="Krishnakumar V."/>
            <person name="Chan A.P."/>
            <person name="Thibaud-Nissen F."/>
            <person name="Schobel S."/>
            <person name="Town C.D."/>
        </authorList>
    </citation>
    <scope>GENOME REANNOTATION</scope>
    <source>
        <strain>cv. Columbia</strain>
    </source>
</reference>
<reference key="3">
    <citation type="journal article" date="2003" name="Science">
        <title>Empirical analysis of transcriptional activity in the Arabidopsis genome.</title>
        <authorList>
            <person name="Yamada K."/>
            <person name="Lim J."/>
            <person name="Dale J.M."/>
            <person name="Chen H."/>
            <person name="Shinn P."/>
            <person name="Palm C.J."/>
            <person name="Southwick A.M."/>
            <person name="Wu H.C."/>
            <person name="Kim C.J."/>
            <person name="Nguyen M."/>
            <person name="Pham P.K."/>
            <person name="Cheuk R.F."/>
            <person name="Karlin-Newmann G."/>
            <person name="Liu S.X."/>
            <person name="Lam B."/>
            <person name="Sakano H."/>
            <person name="Wu T."/>
            <person name="Yu G."/>
            <person name="Miranda M."/>
            <person name="Quach H.L."/>
            <person name="Tripp M."/>
            <person name="Chang C.H."/>
            <person name="Lee J.M."/>
            <person name="Toriumi M.J."/>
            <person name="Chan M.M."/>
            <person name="Tang C.C."/>
            <person name="Onodera C.S."/>
            <person name="Deng J.M."/>
            <person name="Akiyama K."/>
            <person name="Ansari Y."/>
            <person name="Arakawa T."/>
            <person name="Banh J."/>
            <person name="Banno F."/>
            <person name="Bowser L."/>
            <person name="Brooks S.Y."/>
            <person name="Carninci P."/>
            <person name="Chao Q."/>
            <person name="Choy N."/>
            <person name="Enju A."/>
            <person name="Goldsmith A.D."/>
            <person name="Gurjal M."/>
            <person name="Hansen N.F."/>
            <person name="Hayashizaki Y."/>
            <person name="Johnson-Hopson C."/>
            <person name="Hsuan V.W."/>
            <person name="Iida K."/>
            <person name="Karnes M."/>
            <person name="Khan S."/>
            <person name="Koesema E."/>
            <person name="Ishida J."/>
            <person name="Jiang P.X."/>
            <person name="Jones T."/>
            <person name="Kawai J."/>
            <person name="Kamiya A."/>
            <person name="Meyers C."/>
            <person name="Nakajima M."/>
            <person name="Narusaka M."/>
            <person name="Seki M."/>
            <person name="Sakurai T."/>
            <person name="Satou M."/>
            <person name="Tamse R."/>
            <person name="Vaysberg M."/>
            <person name="Wallender E.K."/>
            <person name="Wong C."/>
            <person name="Yamamura Y."/>
            <person name="Yuan S."/>
            <person name="Shinozaki K."/>
            <person name="Davis R.W."/>
            <person name="Theologis A."/>
            <person name="Ecker J.R."/>
        </authorList>
    </citation>
    <scope>NUCLEOTIDE SEQUENCE [LARGE SCALE MRNA]</scope>
    <source>
        <strain>cv. Columbia</strain>
    </source>
</reference>
<reference key="4">
    <citation type="submission" date="2004-09" db="EMBL/GenBank/DDBJ databases">
        <title>Large-scale analysis of RIKEN Arabidopsis full-length (RAFL) cDNAs.</title>
        <authorList>
            <person name="Totoki Y."/>
            <person name="Seki M."/>
            <person name="Ishida J."/>
            <person name="Nakajima M."/>
            <person name="Enju A."/>
            <person name="Kamiya A."/>
            <person name="Narusaka M."/>
            <person name="Shin-i T."/>
            <person name="Nakagawa M."/>
            <person name="Sakamoto N."/>
            <person name="Oishi K."/>
            <person name="Kohara Y."/>
            <person name="Kobayashi M."/>
            <person name="Toyoda A."/>
            <person name="Sakaki Y."/>
            <person name="Sakurai T."/>
            <person name="Iida K."/>
            <person name="Akiyama K."/>
            <person name="Satou M."/>
            <person name="Toyoda T."/>
            <person name="Konagaya A."/>
            <person name="Carninci P."/>
            <person name="Kawai J."/>
            <person name="Hayashizaki Y."/>
            <person name="Shinozaki K."/>
        </authorList>
    </citation>
    <scope>NUCLEOTIDE SEQUENCE [LARGE SCALE MRNA]</scope>
    <source>
        <strain>cv. Columbia</strain>
    </source>
</reference>